<evidence type="ECO:0000255" key="1">
    <source>
        <dbReference type="PROSITE-ProRule" id="PRU00080"/>
    </source>
</evidence>
<accession>Q9LXQ7</accession>
<protein>
    <recommendedName>
        <fullName>Putative F-box protein At3g58950</fullName>
    </recommendedName>
</protein>
<dbReference type="EMBL" id="AL353032">
    <property type="protein sequence ID" value="CAB88312.1"/>
    <property type="molecule type" value="Genomic_DNA"/>
</dbReference>
<dbReference type="EMBL" id="CP002686">
    <property type="protein sequence ID" value="AEE79853.1"/>
    <property type="molecule type" value="Genomic_DNA"/>
</dbReference>
<dbReference type="PIR" id="T49178">
    <property type="entry name" value="T49178"/>
</dbReference>
<dbReference type="RefSeq" id="NP_191454.1">
    <property type="nucleotide sequence ID" value="NM_115757.2"/>
</dbReference>
<dbReference type="PaxDb" id="3702-AT3G58950.1"/>
<dbReference type="EnsemblPlants" id="AT3G58950.1">
    <property type="protein sequence ID" value="AT3G58950.1"/>
    <property type="gene ID" value="AT3G58950"/>
</dbReference>
<dbReference type="GeneID" id="825064"/>
<dbReference type="Gramene" id="AT3G58950.1">
    <property type="protein sequence ID" value="AT3G58950.1"/>
    <property type="gene ID" value="AT3G58950"/>
</dbReference>
<dbReference type="KEGG" id="ath:AT3G58950"/>
<dbReference type="Araport" id="AT3G58950"/>
<dbReference type="TAIR" id="AT3G58950"/>
<dbReference type="HOGENOM" id="CLU_010721_7_1_1"/>
<dbReference type="InParanoid" id="Q9LXQ7"/>
<dbReference type="OMA" id="FTIGCEN"/>
<dbReference type="PhylomeDB" id="Q9LXQ7"/>
<dbReference type="PRO" id="PR:Q9LXQ7"/>
<dbReference type="Proteomes" id="UP000006548">
    <property type="component" value="Chromosome 3"/>
</dbReference>
<dbReference type="ExpressionAtlas" id="Q9LXQ7">
    <property type="expression patterns" value="baseline and differential"/>
</dbReference>
<dbReference type="CDD" id="cd22160">
    <property type="entry name" value="F-box_AtFBL13-like"/>
    <property type="match status" value="1"/>
</dbReference>
<dbReference type="Gene3D" id="1.20.1280.50">
    <property type="match status" value="1"/>
</dbReference>
<dbReference type="Gene3D" id="3.80.10.10">
    <property type="entry name" value="Ribonuclease Inhibitor"/>
    <property type="match status" value="1"/>
</dbReference>
<dbReference type="InterPro" id="IPR036047">
    <property type="entry name" value="F-box-like_dom_sf"/>
</dbReference>
<dbReference type="InterPro" id="IPR053781">
    <property type="entry name" value="F-box_AtFBL13-like"/>
</dbReference>
<dbReference type="InterPro" id="IPR001810">
    <property type="entry name" value="F-box_dom"/>
</dbReference>
<dbReference type="InterPro" id="IPR006566">
    <property type="entry name" value="FBD"/>
</dbReference>
<dbReference type="InterPro" id="IPR055294">
    <property type="entry name" value="FBL60-like"/>
</dbReference>
<dbReference type="InterPro" id="IPR032675">
    <property type="entry name" value="LRR_dom_sf"/>
</dbReference>
<dbReference type="PANTHER" id="PTHR31293:SF25">
    <property type="entry name" value="F-BOX_RNI SUPERFAMILY PROTEIN"/>
    <property type="match status" value="1"/>
</dbReference>
<dbReference type="PANTHER" id="PTHR31293">
    <property type="entry name" value="RNI-LIKE SUPERFAMILY PROTEIN"/>
    <property type="match status" value="1"/>
</dbReference>
<dbReference type="Pfam" id="PF00646">
    <property type="entry name" value="F-box"/>
    <property type="match status" value="1"/>
</dbReference>
<dbReference type="SMART" id="SM00579">
    <property type="entry name" value="FBD"/>
    <property type="match status" value="1"/>
</dbReference>
<dbReference type="SMART" id="SM00256">
    <property type="entry name" value="FBOX"/>
    <property type="match status" value="1"/>
</dbReference>
<dbReference type="SUPFAM" id="SSF81383">
    <property type="entry name" value="F-box domain"/>
    <property type="match status" value="1"/>
</dbReference>
<dbReference type="SUPFAM" id="SSF52047">
    <property type="entry name" value="RNI-like"/>
    <property type="match status" value="1"/>
</dbReference>
<dbReference type="PROSITE" id="PS50181">
    <property type="entry name" value="FBOX"/>
    <property type="match status" value="1"/>
</dbReference>
<proteinExistence type="predicted"/>
<sequence length="417" mass="48055">MDLFSSLPDEVLCHILSFLTTKEAALASVVSKRWRNQFALVPNLDIDEEGKREREEILLSFMDFVDNVLALQADSPIKKFSLKCKTGVHPRRLDAWARLGPVLPMLKTLIIDSAWIRCDTIETFLPTFPVLEELSMSINEWPDWDETVTSASLRKLSIFTIGCENFSNPKSISFDIPSLVYFEYYDMVAEDYPKVNLTSVVEARISLLLDQDQIKRGRAPNNDEDDVLLRLRNGWKLMSGIRNVQKLYISLDTLQVLSLCCKSMPVFNNLKLLSVKTAENEGWEGMPVLLRNCPHLETLVFEGLRHFVTNKCGDACDYVSREDKGRSLVSCPVKKLQIKGFRGTIRELEMIKHFLYSFRCLEKVEIYAEEKGRTRTDLEVPGMFELIARMLRLYNEFYSCDVQFLVRSSLDKKWTAQ</sequence>
<gene>
    <name type="ordered locus">At3g58950</name>
    <name type="ORF">T20N10.300</name>
</gene>
<name>FB209_ARATH</name>
<keyword id="KW-1185">Reference proteome</keyword>
<organism>
    <name type="scientific">Arabidopsis thaliana</name>
    <name type="common">Mouse-ear cress</name>
    <dbReference type="NCBI Taxonomy" id="3702"/>
    <lineage>
        <taxon>Eukaryota</taxon>
        <taxon>Viridiplantae</taxon>
        <taxon>Streptophyta</taxon>
        <taxon>Embryophyta</taxon>
        <taxon>Tracheophyta</taxon>
        <taxon>Spermatophyta</taxon>
        <taxon>Magnoliopsida</taxon>
        <taxon>eudicotyledons</taxon>
        <taxon>Gunneridae</taxon>
        <taxon>Pentapetalae</taxon>
        <taxon>rosids</taxon>
        <taxon>malvids</taxon>
        <taxon>Brassicales</taxon>
        <taxon>Brassicaceae</taxon>
        <taxon>Camelineae</taxon>
        <taxon>Arabidopsis</taxon>
    </lineage>
</organism>
<feature type="chain" id="PRO_0000283479" description="Putative F-box protein At3g58950">
    <location>
        <begin position="1"/>
        <end position="417"/>
    </location>
</feature>
<feature type="domain" description="F-box" evidence="1">
    <location>
        <begin position="1"/>
        <end position="53"/>
    </location>
</feature>
<reference key="1">
    <citation type="journal article" date="2000" name="Nature">
        <title>Sequence and analysis of chromosome 3 of the plant Arabidopsis thaliana.</title>
        <authorList>
            <person name="Salanoubat M."/>
            <person name="Lemcke K."/>
            <person name="Rieger M."/>
            <person name="Ansorge W."/>
            <person name="Unseld M."/>
            <person name="Fartmann B."/>
            <person name="Valle G."/>
            <person name="Bloecker H."/>
            <person name="Perez-Alonso M."/>
            <person name="Obermaier B."/>
            <person name="Delseny M."/>
            <person name="Boutry M."/>
            <person name="Grivell L.A."/>
            <person name="Mache R."/>
            <person name="Puigdomenech P."/>
            <person name="De Simone V."/>
            <person name="Choisne N."/>
            <person name="Artiguenave F."/>
            <person name="Robert C."/>
            <person name="Brottier P."/>
            <person name="Wincker P."/>
            <person name="Cattolico L."/>
            <person name="Weissenbach J."/>
            <person name="Saurin W."/>
            <person name="Quetier F."/>
            <person name="Schaefer M."/>
            <person name="Mueller-Auer S."/>
            <person name="Gabel C."/>
            <person name="Fuchs M."/>
            <person name="Benes V."/>
            <person name="Wurmbach E."/>
            <person name="Drzonek H."/>
            <person name="Erfle H."/>
            <person name="Jordan N."/>
            <person name="Bangert S."/>
            <person name="Wiedelmann R."/>
            <person name="Kranz H."/>
            <person name="Voss H."/>
            <person name="Holland R."/>
            <person name="Brandt P."/>
            <person name="Nyakatura G."/>
            <person name="Vezzi A."/>
            <person name="D'Angelo M."/>
            <person name="Pallavicini A."/>
            <person name="Toppo S."/>
            <person name="Simionati B."/>
            <person name="Conrad A."/>
            <person name="Hornischer K."/>
            <person name="Kauer G."/>
            <person name="Loehnert T.-H."/>
            <person name="Nordsiek G."/>
            <person name="Reichelt J."/>
            <person name="Scharfe M."/>
            <person name="Schoen O."/>
            <person name="Bargues M."/>
            <person name="Terol J."/>
            <person name="Climent J."/>
            <person name="Navarro P."/>
            <person name="Collado C."/>
            <person name="Perez-Perez A."/>
            <person name="Ottenwaelder B."/>
            <person name="Duchemin D."/>
            <person name="Cooke R."/>
            <person name="Laudie M."/>
            <person name="Berger-Llauro C."/>
            <person name="Purnelle B."/>
            <person name="Masuy D."/>
            <person name="de Haan M."/>
            <person name="Maarse A.C."/>
            <person name="Alcaraz J.-P."/>
            <person name="Cottet A."/>
            <person name="Casacuberta E."/>
            <person name="Monfort A."/>
            <person name="Argiriou A."/>
            <person name="Flores M."/>
            <person name="Liguori R."/>
            <person name="Vitale D."/>
            <person name="Mannhaupt G."/>
            <person name="Haase D."/>
            <person name="Schoof H."/>
            <person name="Rudd S."/>
            <person name="Zaccaria P."/>
            <person name="Mewes H.-W."/>
            <person name="Mayer K.F.X."/>
            <person name="Kaul S."/>
            <person name="Town C.D."/>
            <person name="Koo H.L."/>
            <person name="Tallon L.J."/>
            <person name="Jenkins J."/>
            <person name="Rooney T."/>
            <person name="Rizzo M."/>
            <person name="Walts A."/>
            <person name="Utterback T."/>
            <person name="Fujii C.Y."/>
            <person name="Shea T.P."/>
            <person name="Creasy T.H."/>
            <person name="Haas B."/>
            <person name="Maiti R."/>
            <person name="Wu D."/>
            <person name="Peterson J."/>
            <person name="Van Aken S."/>
            <person name="Pai G."/>
            <person name="Militscher J."/>
            <person name="Sellers P."/>
            <person name="Gill J.E."/>
            <person name="Feldblyum T.V."/>
            <person name="Preuss D."/>
            <person name="Lin X."/>
            <person name="Nierman W.C."/>
            <person name="Salzberg S.L."/>
            <person name="White O."/>
            <person name="Venter J.C."/>
            <person name="Fraser C.M."/>
            <person name="Kaneko T."/>
            <person name="Nakamura Y."/>
            <person name="Sato S."/>
            <person name="Kato T."/>
            <person name="Asamizu E."/>
            <person name="Sasamoto S."/>
            <person name="Kimura T."/>
            <person name="Idesawa K."/>
            <person name="Kawashima K."/>
            <person name="Kishida Y."/>
            <person name="Kiyokawa C."/>
            <person name="Kohara M."/>
            <person name="Matsumoto M."/>
            <person name="Matsuno A."/>
            <person name="Muraki A."/>
            <person name="Nakayama S."/>
            <person name="Nakazaki N."/>
            <person name="Shinpo S."/>
            <person name="Takeuchi C."/>
            <person name="Wada T."/>
            <person name="Watanabe A."/>
            <person name="Yamada M."/>
            <person name="Yasuda M."/>
            <person name="Tabata S."/>
        </authorList>
    </citation>
    <scope>NUCLEOTIDE SEQUENCE [LARGE SCALE GENOMIC DNA]</scope>
    <source>
        <strain>cv. Columbia</strain>
    </source>
</reference>
<reference key="2">
    <citation type="journal article" date="2017" name="Plant J.">
        <title>Araport11: a complete reannotation of the Arabidopsis thaliana reference genome.</title>
        <authorList>
            <person name="Cheng C.Y."/>
            <person name="Krishnakumar V."/>
            <person name="Chan A.P."/>
            <person name="Thibaud-Nissen F."/>
            <person name="Schobel S."/>
            <person name="Town C.D."/>
        </authorList>
    </citation>
    <scope>GENOME REANNOTATION</scope>
    <source>
        <strain>cv. Columbia</strain>
    </source>
</reference>